<proteinExistence type="inferred from homology"/>
<evidence type="ECO:0000255" key="1">
    <source>
        <dbReference type="HAMAP-Rule" id="MF_01122"/>
    </source>
</evidence>
<protein>
    <recommendedName>
        <fullName evidence="1">DNA/RNA-binding protein Alba 1</fullName>
    </recommendedName>
</protein>
<comment type="function">
    <text evidence="1">Binds double-stranded DNA tightly but without sequence specificity. Involved in DNA compaction.</text>
</comment>
<comment type="subcellular location">
    <subcellularLocation>
        <location evidence="1">Cytoplasm</location>
    </subcellularLocation>
    <subcellularLocation>
        <location evidence="1">Chromosome</location>
    </subcellularLocation>
</comment>
<comment type="PTM">
    <text evidence="1">Acetylated. Acetylation at Lys-17 decreases DNA-binding affinity.</text>
</comment>
<comment type="similarity">
    <text evidence="1">Belongs to the histone-like Alba family.</text>
</comment>
<keyword id="KW-0007">Acetylation</keyword>
<keyword id="KW-0158">Chromosome</keyword>
<keyword id="KW-0963">Cytoplasm</keyword>
<keyword id="KW-0226">DNA condensation</keyword>
<keyword id="KW-0238">DNA-binding</keyword>
<keyword id="KW-1185">Reference proteome</keyword>
<feature type="chain" id="PRO_0000151714" description="DNA/RNA-binding protein Alba 1">
    <location>
        <begin position="1"/>
        <end position="99"/>
    </location>
</feature>
<feature type="modified residue" description="N6-acetyllysine" evidence="1">
    <location>
        <position position="17"/>
    </location>
</feature>
<name>ALBA1_SULTO</name>
<organism>
    <name type="scientific">Sulfurisphaera tokodaii (strain DSM 16993 / JCM 10545 / NBRC 100140 / 7)</name>
    <name type="common">Sulfolobus tokodaii</name>
    <dbReference type="NCBI Taxonomy" id="273063"/>
    <lineage>
        <taxon>Archaea</taxon>
        <taxon>Thermoproteota</taxon>
        <taxon>Thermoprotei</taxon>
        <taxon>Sulfolobales</taxon>
        <taxon>Sulfolobaceae</taxon>
        <taxon>Sulfurisphaera</taxon>
    </lineage>
</organism>
<accession>Q971T8</accession>
<accession>F9VP01</accession>
<gene>
    <name evidence="1" type="primary">albA1</name>
    <name type="ordered locus">STK_12895</name>
    <name type="ORF">STS141</name>
</gene>
<reference key="1">
    <citation type="journal article" date="2001" name="DNA Res.">
        <title>Complete genome sequence of an aerobic thermoacidophilic Crenarchaeon, Sulfolobus tokodaii strain7.</title>
        <authorList>
            <person name="Kawarabayasi Y."/>
            <person name="Hino Y."/>
            <person name="Horikawa H."/>
            <person name="Jin-no K."/>
            <person name="Takahashi M."/>
            <person name="Sekine M."/>
            <person name="Baba S."/>
            <person name="Ankai A."/>
            <person name="Kosugi H."/>
            <person name="Hosoyama A."/>
            <person name="Fukui S."/>
            <person name="Nagai Y."/>
            <person name="Nishijima K."/>
            <person name="Otsuka R."/>
            <person name="Nakazawa H."/>
            <person name="Takamiya M."/>
            <person name="Kato Y."/>
            <person name="Yoshizawa T."/>
            <person name="Tanaka T."/>
            <person name="Kudoh Y."/>
            <person name="Yamazaki J."/>
            <person name="Kushida N."/>
            <person name="Oguchi A."/>
            <person name="Aoki K."/>
            <person name="Masuda S."/>
            <person name="Yanagii M."/>
            <person name="Nishimura M."/>
            <person name="Yamagishi A."/>
            <person name="Oshima T."/>
            <person name="Kikuchi H."/>
        </authorList>
    </citation>
    <scope>NUCLEOTIDE SEQUENCE [LARGE SCALE GENOMIC DNA]</scope>
    <source>
        <strain>DSM 16993 / JCM 10545 / NBRC 100140 / 7</strain>
    </source>
</reference>
<dbReference type="EMBL" id="BA000023">
    <property type="protein sequence ID" value="BAK54509.1"/>
    <property type="molecule type" value="Genomic_DNA"/>
</dbReference>
<dbReference type="SMR" id="Q971T8"/>
<dbReference type="STRING" id="273063.STK_12895"/>
<dbReference type="KEGG" id="sto:STK_12895"/>
<dbReference type="PATRIC" id="fig|273063.9.peg.1448"/>
<dbReference type="eggNOG" id="arCOG01753">
    <property type="taxonomic scope" value="Archaea"/>
</dbReference>
<dbReference type="OrthoDB" id="10360at2157"/>
<dbReference type="Proteomes" id="UP000001015">
    <property type="component" value="Chromosome"/>
</dbReference>
<dbReference type="GO" id="GO:0005694">
    <property type="term" value="C:chromosome"/>
    <property type="evidence" value="ECO:0007669"/>
    <property type="project" value="UniProtKB-SubCell"/>
</dbReference>
<dbReference type="GO" id="GO:0005737">
    <property type="term" value="C:cytoplasm"/>
    <property type="evidence" value="ECO:0007669"/>
    <property type="project" value="UniProtKB-SubCell"/>
</dbReference>
<dbReference type="GO" id="GO:0003690">
    <property type="term" value="F:double-stranded DNA binding"/>
    <property type="evidence" value="ECO:0007669"/>
    <property type="project" value="UniProtKB-UniRule"/>
</dbReference>
<dbReference type="GO" id="GO:0003723">
    <property type="term" value="F:RNA binding"/>
    <property type="evidence" value="ECO:0007669"/>
    <property type="project" value="InterPro"/>
</dbReference>
<dbReference type="GO" id="GO:0030261">
    <property type="term" value="P:chromosome condensation"/>
    <property type="evidence" value="ECO:0007669"/>
    <property type="project" value="UniProtKB-KW"/>
</dbReference>
<dbReference type="FunFam" id="3.30.110.20:FF:000008">
    <property type="entry name" value="DNA/RNA-binding protein Alba 1"/>
    <property type="match status" value="1"/>
</dbReference>
<dbReference type="Gene3D" id="3.30.110.20">
    <property type="entry name" value="Alba-like domain"/>
    <property type="match status" value="1"/>
</dbReference>
<dbReference type="HAMAP" id="MF_01122">
    <property type="entry name" value="AlbA"/>
    <property type="match status" value="1"/>
</dbReference>
<dbReference type="InterPro" id="IPR036882">
    <property type="entry name" value="Alba-like_dom_sf"/>
</dbReference>
<dbReference type="InterPro" id="IPR013795">
    <property type="entry name" value="DNA/RNA-bd_Alba"/>
</dbReference>
<dbReference type="InterPro" id="IPR002775">
    <property type="entry name" value="DNA/RNA-bd_Alba-like"/>
</dbReference>
<dbReference type="NCBIfam" id="TIGR00285">
    <property type="entry name" value="DNA-binding protein Alba"/>
    <property type="match status" value="1"/>
</dbReference>
<dbReference type="NCBIfam" id="NF003088">
    <property type="entry name" value="PRK04015.1"/>
    <property type="match status" value="1"/>
</dbReference>
<dbReference type="Pfam" id="PF01918">
    <property type="entry name" value="Alba"/>
    <property type="match status" value="1"/>
</dbReference>
<dbReference type="PIRSF" id="PIRSF028732">
    <property type="entry name" value="Alba"/>
    <property type="match status" value="1"/>
</dbReference>
<dbReference type="SUPFAM" id="SSF82704">
    <property type="entry name" value="AlbA-like"/>
    <property type="match status" value="1"/>
</dbReference>
<sequence>MSSTATPTPSNVVLVGKKPVMNYVLAALTLLNQGVSEIIIKARGRAISKAVDTVEIVRNRFLPDKIEVKEIRIGSQVVTSQDGRQSRVSTIEIAIRKKA</sequence>